<sequence length="186" mass="20937">MTVADAKKTADQKMQKSIETLKADLAKVRTGRAHTGILDHVMVEYYGNPTNLTQVANVTLIDARTIGVQPFEKKMVAVVEKAIRDADLGLNPATQGEMIRVPTPPLTEERRKEMVKLVKSEAEDAKIAIRNIRRDANETLKKLLKDKACSEDDERRAQDEIQKLTDKFVLEVDKLVVEKEKEVLTV</sequence>
<accession>A4G4S4</accession>
<keyword id="KW-0963">Cytoplasm</keyword>
<keyword id="KW-0648">Protein biosynthesis</keyword>
<keyword id="KW-1185">Reference proteome</keyword>
<protein>
    <recommendedName>
        <fullName evidence="1">Ribosome-recycling factor</fullName>
        <shortName evidence="1">RRF</shortName>
    </recommendedName>
    <alternativeName>
        <fullName evidence="1">Ribosome-releasing factor</fullName>
    </alternativeName>
</protein>
<evidence type="ECO:0000255" key="1">
    <source>
        <dbReference type="HAMAP-Rule" id="MF_00040"/>
    </source>
</evidence>
<comment type="function">
    <text evidence="1">Responsible for the release of ribosomes from messenger RNA at the termination of protein biosynthesis. May increase the efficiency of translation by recycling ribosomes from one round of translation to another.</text>
</comment>
<comment type="subcellular location">
    <subcellularLocation>
        <location evidence="1">Cytoplasm</location>
    </subcellularLocation>
</comment>
<comment type="similarity">
    <text evidence="1">Belongs to the RRF family.</text>
</comment>
<feature type="chain" id="PRO_1000003179" description="Ribosome-recycling factor">
    <location>
        <begin position="1"/>
        <end position="186"/>
    </location>
</feature>
<gene>
    <name evidence="1" type="primary">frr</name>
    <name type="ordered locus">HEAR1338</name>
</gene>
<reference key="1">
    <citation type="journal article" date="2007" name="PLoS Genet.">
        <title>A tale of two oxidation states: bacterial colonization of arsenic-rich environments.</title>
        <authorList>
            <person name="Muller D."/>
            <person name="Medigue C."/>
            <person name="Koechler S."/>
            <person name="Barbe V."/>
            <person name="Barakat M."/>
            <person name="Talla E."/>
            <person name="Bonnefoy V."/>
            <person name="Krin E."/>
            <person name="Arsene-Ploetze F."/>
            <person name="Carapito C."/>
            <person name="Chandler M."/>
            <person name="Cournoyer B."/>
            <person name="Cruveiller S."/>
            <person name="Dossat C."/>
            <person name="Duval S."/>
            <person name="Heymann M."/>
            <person name="Leize E."/>
            <person name="Lieutaud A."/>
            <person name="Lievremont D."/>
            <person name="Makita Y."/>
            <person name="Mangenot S."/>
            <person name="Nitschke W."/>
            <person name="Ortet P."/>
            <person name="Perdrial N."/>
            <person name="Schoepp B."/>
            <person name="Siguier P."/>
            <person name="Simeonova D.D."/>
            <person name="Rouy Z."/>
            <person name="Segurens B."/>
            <person name="Turlin E."/>
            <person name="Vallenet D."/>
            <person name="van Dorsselaer A."/>
            <person name="Weiss S."/>
            <person name="Weissenbach J."/>
            <person name="Lett M.-C."/>
            <person name="Danchin A."/>
            <person name="Bertin P.N."/>
        </authorList>
    </citation>
    <scope>NUCLEOTIDE SEQUENCE [LARGE SCALE GENOMIC DNA]</scope>
    <source>
        <strain>ULPAs1</strain>
    </source>
</reference>
<name>RRF_HERAR</name>
<proteinExistence type="inferred from homology"/>
<dbReference type="EMBL" id="CU207211">
    <property type="protein sequence ID" value="CAL61511.1"/>
    <property type="molecule type" value="Genomic_DNA"/>
</dbReference>
<dbReference type="SMR" id="A4G4S4"/>
<dbReference type="STRING" id="204773.HEAR1338"/>
<dbReference type="KEGG" id="har:HEAR1338"/>
<dbReference type="eggNOG" id="COG0233">
    <property type="taxonomic scope" value="Bacteria"/>
</dbReference>
<dbReference type="HOGENOM" id="CLU_073981_2_1_4"/>
<dbReference type="OrthoDB" id="9804006at2"/>
<dbReference type="Proteomes" id="UP000006697">
    <property type="component" value="Chromosome"/>
</dbReference>
<dbReference type="GO" id="GO:0005829">
    <property type="term" value="C:cytosol"/>
    <property type="evidence" value="ECO:0007669"/>
    <property type="project" value="GOC"/>
</dbReference>
<dbReference type="GO" id="GO:0043023">
    <property type="term" value="F:ribosomal large subunit binding"/>
    <property type="evidence" value="ECO:0007669"/>
    <property type="project" value="TreeGrafter"/>
</dbReference>
<dbReference type="GO" id="GO:0002184">
    <property type="term" value="P:cytoplasmic translational termination"/>
    <property type="evidence" value="ECO:0007669"/>
    <property type="project" value="TreeGrafter"/>
</dbReference>
<dbReference type="CDD" id="cd00520">
    <property type="entry name" value="RRF"/>
    <property type="match status" value="1"/>
</dbReference>
<dbReference type="FunFam" id="1.10.132.20:FF:000001">
    <property type="entry name" value="Ribosome-recycling factor"/>
    <property type="match status" value="1"/>
</dbReference>
<dbReference type="FunFam" id="3.30.1360.40:FF:000001">
    <property type="entry name" value="Ribosome-recycling factor"/>
    <property type="match status" value="1"/>
</dbReference>
<dbReference type="Gene3D" id="3.30.1360.40">
    <property type="match status" value="1"/>
</dbReference>
<dbReference type="Gene3D" id="1.10.132.20">
    <property type="entry name" value="Ribosome-recycling factor"/>
    <property type="match status" value="1"/>
</dbReference>
<dbReference type="HAMAP" id="MF_00040">
    <property type="entry name" value="RRF"/>
    <property type="match status" value="1"/>
</dbReference>
<dbReference type="InterPro" id="IPR002661">
    <property type="entry name" value="Ribosome_recyc_fac"/>
</dbReference>
<dbReference type="InterPro" id="IPR023584">
    <property type="entry name" value="Ribosome_recyc_fac_dom"/>
</dbReference>
<dbReference type="InterPro" id="IPR036191">
    <property type="entry name" value="RRF_sf"/>
</dbReference>
<dbReference type="NCBIfam" id="TIGR00496">
    <property type="entry name" value="frr"/>
    <property type="match status" value="1"/>
</dbReference>
<dbReference type="PANTHER" id="PTHR20982:SF3">
    <property type="entry name" value="MITOCHONDRIAL RIBOSOME RECYCLING FACTOR PSEUDO 1"/>
    <property type="match status" value="1"/>
</dbReference>
<dbReference type="PANTHER" id="PTHR20982">
    <property type="entry name" value="RIBOSOME RECYCLING FACTOR"/>
    <property type="match status" value="1"/>
</dbReference>
<dbReference type="Pfam" id="PF01765">
    <property type="entry name" value="RRF"/>
    <property type="match status" value="1"/>
</dbReference>
<dbReference type="SUPFAM" id="SSF55194">
    <property type="entry name" value="Ribosome recycling factor, RRF"/>
    <property type="match status" value="1"/>
</dbReference>
<organism>
    <name type="scientific">Herminiimonas arsenicoxydans</name>
    <dbReference type="NCBI Taxonomy" id="204773"/>
    <lineage>
        <taxon>Bacteria</taxon>
        <taxon>Pseudomonadati</taxon>
        <taxon>Pseudomonadota</taxon>
        <taxon>Betaproteobacteria</taxon>
        <taxon>Burkholderiales</taxon>
        <taxon>Oxalobacteraceae</taxon>
        <taxon>Herminiimonas</taxon>
    </lineage>
</organism>